<gene>
    <name evidence="1" type="primary">rimM</name>
    <name type="ordered locus">CJJ81176_0735</name>
</gene>
<proteinExistence type="inferred from homology"/>
<protein>
    <recommendedName>
        <fullName evidence="1">Ribosome maturation factor RimM</fullName>
    </recommendedName>
</protein>
<comment type="function">
    <text evidence="1">An accessory protein needed during the final step in the assembly of 30S ribosomal subunit, possibly for assembly of the head region. Essential for efficient processing of 16S rRNA. May be needed both before and after RbfA during the maturation of 16S rRNA. It has affinity for free ribosomal 30S subunits but not for 70S ribosomes.</text>
</comment>
<comment type="subunit">
    <text evidence="1">Binds ribosomal protein uS19.</text>
</comment>
<comment type="subcellular location">
    <subcellularLocation>
        <location evidence="1">Cytoplasm</location>
    </subcellularLocation>
</comment>
<comment type="domain">
    <text evidence="1">The PRC barrel domain binds ribosomal protein uS19.</text>
</comment>
<comment type="similarity">
    <text evidence="1">Belongs to the RimM family.</text>
</comment>
<keyword id="KW-0143">Chaperone</keyword>
<keyword id="KW-0963">Cytoplasm</keyword>
<keyword id="KW-0690">Ribosome biogenesis</keyword>
<keyword id="KW-0698">rRNA processing</keyword>
<accession>A1VZ67</accession>
<sequence length="179" mass="21209">MSEKDFVQVAKLGKTVGLKGYVKLHNLSDFSSQFKKDATFFIKNTKEMLKIKHYNASNSTVLFENYEDIEKAKELINLILFQSIEKSRQTCKLKKDEFFYFDILECEVFEEDKRLGKVIDILETGASYLFEIQSDEKWVEKKYPKIFFIPYLDKFVKNIDIEKRQIFCTQDAFLILENS</sequence>
<feature type="chain" id="PRO_1000001160" description="Ribosome maturation factor RimM">
    <location>
        <begin position="1"/>
        <end position="179"/>
    </location>
</feature>
<feature type="domain" description="PRC barrel" evidence="1">
    <location>
        <begin position="95"/>
        <end position="174"/>
    </location>
</feature>
<organism>
    <name type="scientific">Campylobacter jejuni subsp. jejuni serotype O:23/36 (strain 81-176)</name>
    <dbReference type="NCBI Taxonomy" id="354242"/>
    <lineage>
        <taxon>Bacteria</taxon>
        <taxon>Pseudomonadati</taxon>
        <taxon>Campylobacterota</taxon>
        <taxon>Epsilonproteobacteria</taxon>
        <taxon>Campylobacterales</taxon>
        <taxon>Campylobacteraceae</taxon>
        <taxon>Campylobacter</taxon>
    </lineage>
</organism>
<reference key="1">
    <citation type="submission" date="2006-12" db="EMBL/GenBank/DDBJ databases">
        <authorList>
            <person name="Fouts D.E."/>
            <person name="Nelson K.E."/>
            <person name="Sebastian Y."/>
        </authorList>
    </citation>
    <scope>NUCLEOTIDE SEQUENCE [LARGE SCALE GENOMIC DNA]</scope>
    <source>
        <strain>81-176</strain>
    </source>
</reference>
<evidence type="ECO:0000255" key="1">
    <source>
        <dbReference type="HAMAP-Rule" id="MF_00014"/>
    </source>
</evidence>
<dbReference type="EMBL" id="CP000538">
    <property type="protein sequence ID" value="EAQ72498.1"/>
    <property type="molecule type" value="Genomic_DNA"/>
</dbReference>
<dbReference type="RefSeq" id="WP_002855099.1">
    <property type="nucleotide sequence ID" value="NC_008787.1"/>
</dbReference>
<dbReference type="SMR" id="A1VZ67"/>
<dbReference type="KEGG" id="cjj:CJJ81176_0735"/>
<dbReference type="eggNOG" id="COG0806">
    <property type="taxonomic scope" value="Bacteria"/>
</dbReference>
<dbReference type="HOGENOM" id="CLU_077636_2_0_7"/>
<dbReference type="Proteomes" id="UP000000646">
    <property type="component" value="Chromosome"/>
</dbReference>
<dbReference type="GO" id="GO:0005737">
    <property type="term" value="C:cytoplasm"/>
    <property type="evidence" value="ECO:0007669"/>
    <property type="project" value="UniProtKB-SubCell"/>
</dbReference>
<dbReference type="GO" id="GO:0005840">
    <property type="term" value="C:ribosome"/>
    <property type="evidence" value="ECO:0007669"/>
    <property type="project" value="InterPro"/>
</dbReference>
<dbReference type="GO" id="GO:0043022">
    <property type="term" value="F:ribosome binding"/>
    <property type="evidence" value="ECO:0007669"/>
    <property type="project" value="InterPro"/>
</dbReference>
<dbReference type="GO" id="GO:0042274">
    <property type="term" value="P:ribosomal small subunit biogenesis"/>
    <property type="evidence" value="ECO:0007669"/>
    <property type="project" value="UniProtKB-UniRule"/>
</dbReference>
<dbReference type="GO" id="GO:0006364">
    <property type="term" value="P:rRNA processing"/>
    <property type="evidence" value="ECO:0007669"/>
    <property type="project" value="UniProtKB-UniRule"/>
</dbReference>
<dbReference type="Gene3D" id="2.30.30.240">
    <property type="entry name" value="PRC-barrel domain"/>
    <property type="match status" value="1"/>
</dbReference>
<dbReference type="Gene3D" id="2.40.30.60">
    <property type="entry name" value="RimM"/>
    <property type="match status" value="1"/>
</dbReference>
<dbReference type="HAMAP" id="MF_00014">
    <property type="entry name" value="Ribosome_mat_RimM"/>
    <property type="match status" value="1"/>
</dbReference>
<dbReference type="InterPro" id="IPR027275">
    <property type="entry name" value="PRC-brl_dom"/>
</dbReference>
<dbReference type="InterPro" id="IPR011033">
    <property type="entry name" value="PRC_barrel-like_sf"/>
</dbReference>
<dbReference type="InterPro" id="IPR011961">
    <property type="entry name" value="RimM"/>
</dbReference>
<dbReference type="InterPro" id="IPR002676">
    <property type="entry name" value="RimM_N"/>
</dbReference>
<dbReference type="InterPro" id="IPR036976">
    <property type="entry name" value="RimM_N_sf"/>
</dbReference>
<dbReference type="InterPro" id="IPR009000">
    <property type="entry name" value="Transl_B-barrel_sf"/>
</dbReference>
<dbReference type="NCBIfam" id="TIGR02273">
    <property type="entry name" value="16S_RimM"/>
    <property type="match status" value="1"/>
</dbReference>
<dbReference type="PANTHER" id="PTHR33692">
    <property type="entry name" value="RIBOSOME MATURATION FACTOR RIMM"/>
    <property type="match status" value="1"/>
</dbReference>
<dbReference type="PANTHER" id="PTHR33692:SF1">
    <property type="entry name" value="RIBOSOME MATURATION FACTOR RIMM"/>
    <property type="match status" value="1"/>
</dbReference>
<dbReference type="Pfam" id="PF05239">
    <property type="entry name" value="PRC"/>
    <property type="match status" value="1"/>
</dbReference>
<dbReference type="Pfam" id="PF01782">
    <property type="entry name" value="RimM"/>
    <property type="match status" value="1"/>
</dbReference>
<dbReference type="SUPFAM" id="SSF50346">
    <property type="entry name" value="PRC-barrel domain"/>
    <property type="match status" value="1"/>
</dbReference>
<dbReference type="SUPFAM" id="SSF50447">
    <property type="entry name" value="Translation proteins"/>
    <property type="match status" value="1"/>
</dbReference>
<name>RIMM_CAMJJ</name>